<evidence type="ECO:0000255" key="1">
    <source>
        <dbReference type="HAMAP-Rule" id="MF_04088"/>
    </source>
</evidence>
<feature type="chain" id="PRO_0000369090" description="Non-structural protein 1">
    <location>
        <begin position="1"/>
        <end position="494"/>
    </location>
</feature>
<feature type="region of interest" description="RNA-binding" evidence="1">
    <location>
        <begin position="1"/>
        <end position="83"/>
    </location>
</feature>
<feature type="region of interest" description="Zinc-binding domain" evidence="1">
    <location>
        <begin position="44"/>
        <end position="81"/>
    </location>
</feature>
<feature type="region of interest" description="Important for cytoskeleton localization" evidence="1">
    <location>
        <begin position="84"/>
        <end position="178"/>
    </location>
</feature>
<feature type="region of interest" description="Interaction with host IRF3" evidence="1">
    <location>
        <begin position="320"/>
        <end position="494"/>
    </location>
</feature>
<feature type="short sequence motif" description="pLxIS motif" evidence="1">
    <location>
        <begin position="485"/>
        <end position="488"/>
    </location>
</feature>
<feature type="sequence conflict" description="In Ref. 2; AAM92466." ref="2">
    <original>L</original>
    <variation>V</variation>
    <location>
        <position position="50"/>
    </location>
</feature>
<feature type="sequence conflict" description="In Ref. 3; CAA83546." ref="3">
    <original>C</original>
    <variation>Y</variation>
    <location>
        <position position="74"/>
    </location>
</feature>
<feature type="sequence conflict" description="In Ref. 3; CAA83546." ref="3">
    <original>L</original>
    <variation>F</variation>
    <location>
        <position position="85"/>
    </location>
</feature>
<feature type="sequence conflict" description="In Ref. 3; CAA83546." ref="3">
    <original>S</original>
    <variation>F</variation>
    <location>
        <position position="280"/>
    </location>
</feature>
<feature type="sequence conflict" description="In Ref. 3; CAA83546." ref="3">
    <original>T</original>
    <variation>I</variation>
    <location>
        <position position="434"/>
    </location>
</feature>
<feature type="sequence conflict" description="In Ref. 1; AAA50496." ref="1">
    <original>E</original>
    <variation>G</variation>
    <location>
        <position position="482"/>
    </location>
</feature>
<comment type="function">
    <text evidence="1">Plays a role in the inhibition of host innate immunity by inducing the degradation of key host factors required to activate interferon production such as IRF3, IRF5 or IRF7. Associates with components of cullin RING ligases (CRLs) including CUL1 or CUL3, which are essential multisubunit ubiquitination complexes, to modulate their activities.</text>
</comment>
<comment type="subunit">
    <text evidence="1">Interacts (via C-terminus) with host IRF3; this interaction leads to IRF3 degradation. Interacts with host IRF7; this interaction leads to IRF7 degradation. Interacts with host CUL1 and CUL3.</text>
</comment>
<comment type="subcellular location">
    <subcellularLocation>
        <location evidence="1">Host cytoplasm</location>
        <location evidence="1">Host cytoskeleton</location>
    </subcellularLocation>
</comment>
<comment type="domain">
    <text evidence="1">The integrity of the zinc-binding domain in NSP1 is important for degradation of host IRF3.</text>
</comment>
<comment type="domain">
    <text evidence="1">The pLxIS motif targets host IRF3 for degradation; however phosphorylation of NSP1 pLxIS motif is not required for its activity.</text>
</comment>
<comment type="similarity">
    <text evidence="1">Belongs to the rotavirus NSP1 family.</text>
</comment>
<comment type="sequence caution">
    <conflict type="frameshift">
        <sequence resource="EMBL-CDS" id="AAA50496"/>
    </conflict>
</comment>
<organism>
    <name type="scientific">Rotavirus A (strain RVA/Monkey/United States/RRV/1975/G3P5B[3])</name>
    <name type="common">RV-A</name>
    <dbReference type="NCBI Taxonomy" id="444185"/>
    <lineage>
        <taxon>Viruses</taxon>
        <taxon>Riboviria</taxon>
        <taxon>Orthornavirae</taxon>
        <taxon>Duplornaviricota</taxon>
        <taxon>Resentoviricetes</taxon>
        <taxon>Reovirales</taxon>
        <taxon>Sedoreoviridae</taxon>
        <taxon>Rotavirus</taxon>
        <taxon>Rotavirus A</taxon>
    </lineage>
</organism>
<accession>Q6YLT2</accession>
<accession>Q86280</accession>
<accession>Q88349</accession>
<organismHost>
    <name type="scientific">Macaca mulatta</name>
    <name type="common">Rhesus macaque</name>
    <dbReference type="NCBI Taxonomy" id="9544"/>
</organismHost>
<protein>
    <recommendedName>
        <fullName evidence="1">Non-structural protein 1</fullName>
        <shortName evidence="1">NSP1</shortName>
    </recommendedName>
    <alternativeName>
        <fullName evidence="1">NCVP2</fullName>
    </alternativeName>
    <alternativeName>
        <fullName evidence="1">Non-structural RNA-binding protein 53</fullName>
        <shortName evidence="1">NS53</shortName>
    </alternativeName>
</protein>
<reference key="1">
    <citation type="journal article" date="1994" name="Virology">
        <title>Comparison of the rotavirus nonstructural protein NSP1 (NS53) from different species by sequence analysis and northern blot hybridization.</title>
        <authorList>
            <person name="Dunn S.J."/>
            <person name="Cross T.L."/>
            <person name="Greenberg H.B."/>
        </authorList>
    </citation>
    <scope>NUCLEOTIDE SEQUENCE [GENOMIC RNA]</scope>
</reference>
<reference key="2">
    <citation type="journal article" date="2004" name="EMBO J.">
        <title>Cell-line-induced mutation of the rotavirus genome alters expression of an IRF3-interacting protein.</title>
        <authorList>
            <person name="Kearney K."/>
            <person name="Chen D."/>
            <person name="Taraporewala Z.F."/>
            <person name="Vende P."/>
            <person name="Hoshino Y."/>
            <person name="Tortorici M.A."/>
            <person name="Barro M."/>
            <person name="Patton J.T."/>
        </authorList>
    </citation>
    <scope>NUCLEOTIDE SEQUENCE [MRNA]</scope>
</reference>
<reference key="3">
    <citation type="submission" date="1994-04" db="EMBL/GenBank/DDBJ databases">
        <authorList>
            <person name="McCrae M.A."/>
        </authorList>
    </citation>
    <scope>NUCLEOTIDE SEQUENCE [GENOMIC RNA]</scope>
</reference>
<keyword id="KW-1035">Host cytoplasm</keyword>
<keyword id="KW-1037">Host cytoskeleton</keyword>
<keyword id="KW-0945">Host-virus interaction</keyword>
<keyword id="KW-1090">Inhibition of host innate immune response by virus</keyword>
<keyword id="KW-1092">Inhibition of host IRF3 by virus</keyword>
<keyword id="KW-1093">Inhibition of host IRF7 by virus</keyword>
<keyword id="KW-1113">Inhibition of host RLR pathway by virus</keyword>
<keyword id="KW-0922">Interferon antiviral system evasion</keyword>
<keyword id="KW-0479">Metal-binding</keyword>
<keyword id="KW-0694">RNA-binding</keyword>
<keyword id="KW-0899">Viral immunoevasion</keyword>
<name>NSP1_ROTRH</name>
<dbReference type="EMBL" id="U08433">
    <property type="protein sequence ID" value="AAA50496.1"/>
    <property type="status" value="ALT_FRAME"/>
    <property type="molecule type" value="Genomic_RNA"/>
</dbReference>
<dbReference type="EMBL" id="AY117048">
    <property type="protein sequence ID" value="AAM92466.1"/>
    <property type="molecule type" value="mRNA"/>
</dbReference>
<dbReference type="EMBL" id="Z32535">
    <property type="protein sequence ID" value="CAA83546.1"/>
    <property type="molecule type" value="Genomic_RNA"/>
</dbReference>
<dbReference type="Proteomes" id="UP000174556">
    <property type="component" value="Genome"/>
</dbReference>
<dbReference type="GO" id="GO:0030430">
    <property type="term" value="C:host cell cytoplasm"/>
    <property type="evidence" value="ECO:0007669"/>
    <property type="project" value="UniProtKB-UniRule"/>
</dbReference>
<dbReference type="GO" id="GO:0044163">
    <property type="term" value="C:host cytoskeleton"/>
    <property type="evidence" value="ECO:0007669"/>
    <property type="project" value="UniProtKB-SubCell"/>
</dbReference>
<dbReference type="GO" id="GO:0046872">
    <property type="term" value="F:metal ion binding"/>
    <property type="evidence" value="ECO:0007669"/>
    <property type="project" value="UniProtKB-UniRule"/>
</dbReference>
<dbReference type="GO" id="GO:0003723">
    <property type="term" value="F:RNA binding"/>
    <property type="evidence" value="ECO:0007669"/>
    <property type="project" value="UniProtKB-UniRule"/>
</dbReference>
<dbReference type="GO" id="GO:0039548">
    <property type="term" value="P:symbiont-mediated suppression of host cytoplasmic pattern recognition receptor signaling pathway via inhibition of IRF3 activity"/>
    <property type="evidence" value="ECO:0007669"/>
    <property type="project" value="UniProtKB-UniRule"/>
</dbReference>
<dbReference type="GO" id="GO:0039557">
    <property type="term" value="P:symbiont-mediated suppression of host cytoplasmic pattern recognition receptor signaling pathway via inhibition of IRF7 activity"/>
    <property type="evidence" value="ECO:0007669"/>
    <property type="project" value="UniProtKB-UniRule"/>
</dbReference>
<dbReference type="HAMAP" id="MF_04088">
    <property type="entry name" value="ROTA_NSP1"/>
    <property type="match status" value="1"/>
</dbReference>
<dbReference type="InterPro" id="IPR002148">
    <property type="entry name" value="Rotavirus_NSP1"/>
</dbReference>
<dbReference type="Pfam" id="PF00981">
    <property type="entry name" value="Rota_NS53"/>
    <property type="match status" value="1"/>
</dbReference>
<sequence>MATFKDACFHYRRVTKLNRELLRIGANSVWTPVSSNKIKIKGWCIECCQLTGLTFCHGCSLAHVCQWCIQNKRCFLDNEPHLLKLRTFESPITKEKLQCIINLYELLFPINHGVINKFKKTIKQRKCRNEFDKSWYNQLLLPITLNAAVFKFHSRDVYVFGFYEGSSPCIDLPYRLVNCIDLYDKLLLDQVNFERMSSLPDNLQSIYANKYFKLSRLPSMKLKRIYYSDFSKQNLINKYKTKSRIVLRNLTEFTWDSQTDLHHDLINDKDKILAALSTSSLKQFETHDLNLGRIKADIFELGHHCKPNYISSNHWQPASKISKCKWCNVKYAFRDMDWKMESMYNELLSFIQSCYKSNVNVGHCSSIEKAYPLVKDILWHSITEYIDQTVEKLFNTMNPVQVNEQQVIKFCWQIDIALYMHIKMILETEALPFTFTLNQFNSIIKGIVNQWCDVAELDHLPLCTEQTDALVKLEEEGKLSEEYELLISDSEDDD</sequence>
<proteinExistence type="evidence at transcript level"/>